<name>FABH_PHOV8</name>
<protein>
    <recommendedName>
        <fullName evidence="1">Beta-ketoacyl-[acyl-carrier-protein] synthase III</fullName>
        <shortName evidence="1">Beta-ketoacyl-ACP synthase III</shortName>
        <shortName evidence="1">KAS III</shortName>
        <ecNumber evidence="1">2.3.1.180</ecNumber>
    </recommendedName>
    <alternativeName>
        <fullName evidence="1">3-oxoacyl-[acyl-carrier-protein] synthase 3</fullName>
    </alternativeName>
    <alternativeName>
        <fullName evidence="1">3-oxoacyl-[acyl-carrier-protein] synthase III</fullName>
    </alternativeName>
</protein>
<dbReference type="EC" id="2.3.1.180" evidence="1"/>
<dbReference type="EMBL" id="CP000139">
    <property type="protein sequence ID" value="ABR38167.1"/>
    <property type="molecule type" value="Genomic_DNA"/>
</dbReference>
<dbReference type="RefSeq" id="WP_008655190.1">
    <property type="nucleotide sequence ID" value="NZ_JANSWM010000030.1"/>
</dbReference>
<dbReference type="SMR" id="A6KXK3"/>
<dbReference type="STRING" id="435590.BVU_0452"/>
<dbReference type="PaxDb" id="435590-BVU_0452"/>
<dbReference type="KEGG" id="bvu:BVU_0452"/>
<dbReference type="eggNOG" id="COG0332">
    <property type="taxonomic scope" value="Bacteria"/>
</dbReference>
<dbReference type="HOGENOM" id="CLU_039592_3_1_10"/>
<dbReference type="BioCyc" id="BVUL435590:G1G59-475-MONOMER"/>
<dbReference type="UniPathway" id="UPA00094"/>
<dbReference type="Proteomes" id="UP000002861">
    <property type="component" value="Chromosome"/>
</dbReference>
<dbReference type="GO" id="GO:0005737">
    <property type="term" value="C:cytoplasm"/>
    <property type="evidence" value="ECO:0007669"/>
    <property type="project" value="UniProtKB-SubCell"/>
</dbReference>
<dbReference type="GO" id="GO:0004315">
    <property type="term" value="F:3-oxoacyl-[acyl-carrier-protein] synthase activity"/>
    <property type="evidence" value="ECO:0007669"/>
    <property type="project" value="InterPro"/>
</dbReference>
<dbReference type="GO" id="GO:0033818">
    <property type="term" value="F:beta-ketoacyl-acyl-carrier-protein synthase III activity"/>
    <property type="evidence" value="ECO:0007669"/>
    <property type="project" value="UniProtKB-UniRule"/>
</dbReference>
<dbReference type="GO" id="GO:0006633">
    <property type="term" value="P:fatty acid biosynthetic process"/>
    <property type="evidence" value="ECO:0007669"/>
    <property type="project" value="UniProtKB-UniRule"/>
</dbReference>
<dbReference type="GO" id="GO:0044550">
    <property type="term" value="P:secondary metabolite biosynthetic process"/>
    <property type="evidence" value="ECO:0007669"/>
    <property type="project" value="TreeGrafter"/>
</dbReference>
<dbReference type="CDD" id="cd00830">
    <property type="entry name" value="KAS_III"/>
    <property type="match status" value="1"/>
</dbReference>
<dbReference type="FunFam" id="3.40.47.10:FF:000004">
    <property type="entry name" value="3-oxoacyl-[acyl-carrier-protein] synthase 3"/>
    <property type="match status" value="1"/>
</dbReference>
<dbReference type="Gene3D" id="3.40.47.10">
    <property type="match status" value="1"/>
</dbReference>
<dbReference type="HAMAP" id="MF_01815">
    <property type="entry name" value="FabH"/>
    <property type="match status" value="1"/>
</dbReference>
<dbReference type="InterPro" id="IPR013747">
    <property type="entry name" value="ACP_syn_III_C"/>
</dbReference>
<dbReference type="InterPro" id="IPR013751">
    <property type="entry name" value="ACP_syn_III_N"/>
</dbReference>
<dbReference type="InterPro" id="IPR004655">
    <property type="entry name" value="FabH"/>
</dbReference>
<dbReference type="InterPro" id="IPR016039">
    <property type="entry name" value="Thiolase-like"/>
</dbReference>
<dbReference type="NCBIfam" id="TIGR00747">
    <property type="entry name" value="fabH"/>
    <property type="match status" value="1"/>
</dbReference>
<dbReference type="NCBIfam" id="NF006829">
    <property type="entry name" value="PRK09352.1"/>
    <property type="match status" value="1"/>
</dbReference>
<dbReference type="PANTHER" id="PTHR34069">
    <property type="entry name" value="3-OXOACYL-[ACYL-CARRIER-PROTEIN] SYNTHASE 3"/>
    <property type="match status" value="1"/>
</dbReference>
<dbReference type="PANTHER" id="PTHR34069:SF2">
    <property type="entry name" value="BETA-KETOACYL-[ACYL-CARRIER-PROTEIN] SYNTHASE III"/>
    <property type="match status" value="1"/>
</dbReference>
<dbReference type="Pfam" id="PF08545">
    <property type="entry name" value="ACP_syn_III"/>
    <property type="match status" value="1"/>
</dbReference>
<dbReference type="Pfam" id="PF08541">
    <property type="entry name" value="ACP_syn_III_C"/>
    <property type="match status" value="1"/>
</dbReference>
<dbReference type="SUPFAM" id="SSF53901">
    <property type="entry name" value="Thiolase-like"/>
    <property type="match status" value="1"/>
</dbReference>
<gene>
    <name evidence="1" type="primary">fabH</name>
    <name type="ordered locus">BVU_0452</name>
</gene>
<evidence type="ECO:0000255" key="1">
    <source>
        <dbReference type="HAMAP-Rule" id="MF_01815"/>
    </source>
</evidence>
<sequence>MEKINAVITGVGGYVPDYVLTNEEISRMVDTNDEWIMTRIGVKERRILNEEGLGTSYMARKAAKQLMQKTASNPDDIDAVIVATTTPDYHFPSTASILCDKLGLKNAFAFDLQAACCGFLYLMETAASLIASGRHKKIIIVGADKMSSMVNYQDRATCPIFGDGAAACMVEATTEDYGIMDSILRTDGKGLPFLHMKAGGSVCPPSYFTVDHKMHYLYQEGRTVFKYAVSNMSDITATIAEKNGLNKDNIDWVIPHQANLRIIDAVASRLEVPLEKVMINIQRYGNTSGATLPLCLWDYEKQLKKGDNLIFTAFGAGFTYGAVYVKWGYDGSKR</sequence>
<organism>
    <name type="scientific">Phocaeicola vulgatus (strain ATCC 8482 / DSM 1447 / JCM 5826 / CCUG 4940 / NBRC 14291 / NCTC 11154)</name>
    <name type="common">Bacteroides vulgatus</name>
    <dbReference type="NCBI Taxonomy" id="435590"/>
    <lineage>
        <taxon>Bacteria</taxon>
        <taxon>Pseudomonadati</taxon>
        <taxon>Bacteroidota</taxon>
        <taxon>Bacteroidia</taxon>
        <taxon>Bacteroidales</taxon>
        <taxon>Bacteroidaceae</taxon>
        <taxon>Phocaeicola</taxon>
    </lineage>
</organism>
<accession>A6KXK3</accession>
<reference key="1">
    <citation type="journal article" date="2007" name="PLoS Biol.">
        <title>Evolution of symbiotic bacteria in the distal human intestine.</title>
        <authorList>
            <person name="Xu J."/>
            <person name="Mahowald M.A."/>
            <person name="Ley R.E."/>
            <person name="Lozupone C.A."/>
            <person name="Hamady M."/>
            <person name="Martens E.C."/>
            <person name="Henrissat B."/>
            <person name="Coutinho P.M."/>
            <person name="Minx P."/>
            <person name="Latreille P."/>
            <person name="Cordum H."/>
            <person name="Van Brunt A."/>
            <person name="Kim K."/>
            <person name="Fulton R.S."/>
            <person name="Fulton L.A."/>
            <person name="Clifton S.W."/>
            <person name="Wilson R.K."/>
            <person name="Knight R.D."/>
            <person name="Gordon J.I."/>
        </authorList>
    </citation>
    <scope>NUCLEOTIDE SEQUENCE [LARGE SCALE GENOMIC DNA]</scope>
    <source>
        <strain>ATCC 8482 / DSM 1447 / JCM 5826 / CCUG 4940 / NBRC 14291 / NCTC 11154</strain>
    </source>
</reference>
<keyword id="KW-0012">Acyltransferase</keyword>
<keyword id="KW-0963">Cytoplasm</keyword>
<keyword id="KW-0275">Fatty acid biosynthesis</keyword>
<keyword id="KW-0276">Fatty acid metabolism</keyword>
<keyword id="KW-0444">Lipid biosynthesis</keyword>
<keyword id="KW-0443">Lipid metabolism</keyword>
<keyword id="KW-0511">Multifunctional enzyme</keyword>
<keyword id="KW-0808">Transferase</keyword>
<feature type="chain" id="PRO_1000056326" description="Beta-ketoacyl-[acyl-carrier-protein] synthase III">
    <location>
        <begin position="1"/>
        <end position="334"/>
    </location>
</feature>
<feature type="region of interest" description="ACP-binding" evidence="1">
    <location>
        <begin position="257"/>
        <end position="261"/>
    </location>
</feature>
<feature type="active site" evidence="1">
    <location>
        <position position="116"/>
    </location>
</feature>
<feature type="active site" evidence="1">
    <location>
        <position position="256"/>
    </location>
</feature>
<feature type="active site" evidence="1">
    <location>
        <position position="286"/>
    </location>
</feature>
<proteinExistence type="inferred from homology"/>
<comment type="function">
    <text evidence="1">Catalyzes the condensation reaction of fatty acid synthesis by the addition to an acyl acceptor of two carbons from malonyl-ACP. Catalyzes the first condensation reaction which initiates fatty acid synthesis and may therefore play a role in governing the total rate of fatty acid production. Possesses both acetoacetyl-ACP synthase and acetyl transacylase activities. Its substrate specificity determines the biosynthesis of branched-chain and/or straight-chain of fatty acids.</text>
</comment>
<comment type="catalytic activity">
    <reaction evidence="1">
        <text>malonyl-[ACP] + acetyl-CoA + H(+) = 3-oxobutanoyl-[ACP] + CO2 + CoA</text>
        <dbReference type="Rhea" id="RHEA:12080"/>
        <dbReference type="Rhea" id="RHEA-COMP:9623"/>
        <dbReference type="Rhea" id="RHEA-COMP:9625"/>
        <dbReference type="ChEBI" id="CHEBI:15378"/>
        <dbReference type="ChEBI" id="CHEBI:16526"/>
        <dbReference type="ChEBI" id="CHEBI:57287"/>
        <dbReference type="ChEBI" id="CHEBI:57288"/>
        <dbReference type="ChEBI" id="CHEBI:78449"/>
        <dbReference type="ChEBI" id="CHEBI:78450"/>
        <dbReference type="EC" id="2.3.1.180"/>
    </reaction>
</comment>
<comment type="pathway">
    <text evidence="1">Lipid metabolism; fatty acid biosynthesis.</text>
</comment>
<comment type="subunit">
    <text evidence="1">Homodimer.</text>
</comment>
<comment type="subcellular location">
    <subcellularLocation>
        <location evidence="1">Cytoplasm</location>
    </subcellularLocation>
</comment>
<comment type="domain">
    <text evidence="1">The last Arg residue of the ACP-binding site is essential for the weak association between ACP/AcpP and FabH.</text>
</comment>
<comment type="similarity">
    <text evidence="1">Belongs to the thiolase-like superfamily. FabH family.</text>
</comment>